<organism>
    <name type="scientific">Rickettsia prowazekii (strain Madrid E)</name>
    <dbReference type="NCBI Taxonomy" id="272947"/>
    <lineage>
        <taxon>Bacteria</taxon>
        <taxon>Pseudomonadati</taxon>
        <taxon>Pseudomonadota</taxon>
        <taxon>Alphaproteobacteria</taxon>
        <taxon>Rickettsiales</taxon>
        <taxon>Rickettsiaceae</taxon>
        <taxon>Rickettsieae</taxon>
        <taxon>Rickettsia</taxon>
        <taxon>typhus group</taxon>
    </lineage>
</organism>
<sequence length="104" mass="11961">MNNTAFSKLAETTIVYIVDKIEEQDLEGIIDVDLQGDILNLDTENGIYVINTQSASKEIWLSSPVSGPHHFFYEQGKWKSRIGFELMVLLTEELGIRFDKYEIF</sequence>
<feature type="chain" id="PRO_0000193957" description="Iron-sulfur cluster assembly protein CyaY">
    <location>
        <begin position="1"/>
        <end position="104"/>
    </location>
</feature>
<evidence type="ECO:0000255" key="1">
    <source>
        <dbReference type="HAMAP-Rule" id="MF_00142"/>
    </source>
</evidence>
<evidence type="ECO:0000305" key="2"/>
<proteinExistence type="inferred from homology"/>
<comment type="function">
    <text evidence="1">Involved in iron-sulfur (Fe-S) cluster assembly. May act as a regulator of Fe-S biogenesis.</text>
</comment>
<comment type="similarity">
    <text evidence="1 2">Belongs to the frataxin family.</text>
</comment>
<gene>
    <name evidence="1" type="primary">cyaY</name>
    <name type="ordered locus">RP323</name>
</gene>
<keyword id="KW-0408">Iron</keyword>
<keyword id="KW-0479">Metal-binding</keyword>
<keyword id="KW-1185">Reference proteome</keyword>
<name>CYAY_RICPR</name>
<reference key="1">
    <citation type="journal article" date="1998" name="Nature">
        <title>The genome sequence of Rickettsia prowazekii and the origin of mitochondria.</title>
        <authorList>
            <person name="Andersson S.G.E."/>
            <person name="Zomorodipour A."/>
            <person name="Andersson J.O."/>
            <person name="Sicheritz-Ponten T."/>
            <person name="Alsmark U.C.M."/>
            <person name="Podowski R.M."/>
            <person name="Naeslund A.K."/>
            <person name="Eriksson A.-S."/>
            <person name="Winkler H.H."/>
            <person name="Kurland C.G."/>
        </authorList>
    </citation>
    <scope>NUCLEOTIDE SEQUENCE [LARGE SCALE GENOMIC DNA]</scope>
    <source>
        <strain>Madrid E</strain>
    </source>
</reference>
<accession>Q9ZDK5</accession>
<protein>
    <recommendedName>
        <fullName evidence="1">Iron-sulfur cluster assembly protein CyaY</fullName>
    </recommendedName>
</protein>
<dbReference type="EMBL" id="AJ235271">
    <property type="protein sequence ID" value="CAA14783.1"/>
    <property type="molecule type" value="Genomic_DNA"/>
</dbReference>
<dbReference type="PIR" id="E71688">
    <property type="entry name" value="E71688"/>
</dbReference>
<dbReference type="RefSeq" id="NP_220706.1">
    <property type="nucleotide sequence ID" value="NC_000963.1"/>
</dbReference>
<dbReference type="RefSeq" id="WP_004597434.1">
    <property type="nucleotide sequence ID" value="NC_000963.1"/>
</dbReference>
<dbReference type="SMR" id="Q9ZDK5"/>
<dbReference type="STRING" id="272947.gene:17555403"/>
<dbReference type="EnsemblBacteria" id="CAA14783">
    <property type="protein sequence ID" value="CAA14783"/>
    <property type="gene ID" value="CAA14783"/>
</dbReference>
<dbReference type="GeneID" id="57569449"/>
<dbReference type="KEGG" id="rpr:RP323"/>
<dbReference type="PATRIC" id="fig|272947.5.peg.332"/>
<dbReference type="eggNOG" id="COG1965">
    <property type="taxonomic scope" value="Bacteria"/>
</dbReference>
<dbReference type="HOGENOM" id="CLU_080880_4_1_5"/>
<dbReference type="OrthoDB" id="8480400at2"/>
<dbReference type="Proteomes" id="UP000002480">
    <property type="component" value="Chromosome"/>
</dbReference>
<dbReference type="GO" id="GO:0005737">
    <property type="term" value="C:cytoplasm"/>
    <property type="evidence" value="ECO:0007669"/>
    <property type="project" value="UniProtKB-ARBA"/>
</dbReference>
<dbReference type="GO" id="GO:0051537">
    <property type="term" value="F:2 iron, 2 sulfur cluster binding"/>
    <property type="evidence" value="ECO:0007669"/>
    <property type="project" value="TreeGrafter"/>
</dbReference>
<dbReference type="GO" id="GO:0008199">
    <property type="term" value="F:ferric iron binding"/>
    <property type="evidence" value="ECO:0007669"/>
    <property type="project" value="InterPro"/>
</dbReference>
<dbReference type="GO" id="GO:0008198">
    <property type="term" value="F:ferrous iron binding"/>
    <property type="evidence" value="ECO:0007669"/>
    <property type="project" value="TreeGrafter"/>
</dbReference>
<dbReference type="GO" id="GO:0004322">
    <property type="term" value="F:ferroxidase activity"/>
    <property type="evidence" value="ECO:0007669"/>
    <property type="project" value="TreeGrafter"/>
</dbReference>
<dbReference type="GO" id="GO:0034986">
    <property type="term" value="F:iron chaperone activity"/>
    <property type="evidence" value="ECO:0007669"/>
    <property type="project" value="TreeGrafter"/>
</dbReference>
<dbReference type="GO" id="GO:0006879">
    <property type="term" value="P:intracellular iron ion homeostasis"/>
    <property type="evidence" value="ECO:0007669"/>
    <property type="project" value="TreeGrafter"/>
</dbReference>
<dbReference type="GO" id="GO:0016226">
    <property type="term" value="P:iron-sulfur cluster assembly"/>
    <property type="evidence" value="ECO:0007669"/>
    <property type="project" value="UniProtKB-UniRule"/>
</dbReference>
<dbReference type="CDD" id="cd00503">
    <property type="entry name" value="Frataxin"/>
    <property type="match status" value="1"/>
</dbReference>
<dbReference type="Gene3D" id="3.30.920.10">
    <property type="entry name" value="Frataxin/CyaY"/>
    <property type="match status" value="1"/>
</dbReference>
<dbReference type="HAMAP" id="MF_00142">
    <property type="entry name" value="CyaY"/>
    <property type="match status" value="1"/>
</dbReference>
<dbReference type="InterPro" id="IPR047584">
    <property type="entry name" value="CyaY"/>
</dbReference>
<dbReference type="InterPro" id="IPR002908">
    <property type="entry name" value="Frataxin/CyaY"/>
</dbReference>
<dbReference type="InterPro" id="IPR036524">
    <property type="entry name" value="Frataxin/CyaY_sf"/>
</dbReference>
<dbReference type="InterPro" id="IPR020895">
    <property type="entry name" value="Frataxin_CS"/>
</dbReference>
<dbReference type="NCBIfam" id="TIGR03421">
    <property type="entry name" value="FeS_CyaY"/>
    <property type="match status" value="1"/>
</dbReference>
<dbReference type="PANTHER" id="PTHR16821">
    <property type="entry name" value="FRATAXIN"/>
    <property type="match status" value="1"/>
</dbReference>
<dbReference type="PANTHER" id="PTHR16821:SF2">
    <property type="entry name" value="FRATAXIN, MITOCHONDRIAL"/>
    <property type="match status" value="1"/>
</dbReference>
<dbReference type="Pfam" id="PF01491">
    <property type="entry name" value="Frataxin_Cyay"/>
    <property type="match status" value="1"/>
</dbReference>
<dbReference type="SMART" id="SM01219">
    <property type="entry name" value="Frataxin_Cyay"/>
    <property type="match status" value="1"/>
</dbReference>
<dbReference type="SUPFAM" id="SSF55387">
    <property type="entry name" value="Frataxin/Nqo15-like"/>
    <property type="match status" value="1"/>
</dbReference>
<dbReference type="PROSITE" id="PS01344">
    <property type="entry name" value="FRATAXIN_1"/>
    <property type="match status" value="1"/>
</dbReference>
<dbReference type="PROSITE" id="PS50810">
    <property type="entry name" value="FRATAXIN_2"/>
    <property type="match status" value="1"/>
</dbReference>